<protein>
    <recommendedName>
        <fullName evidence="1">Serine hydroxymethyltransferase</fullName>
        <shortName evidence="1">SHMT</shortName>
        <shortName evidence="1">Serine methylase</shortName>
        <ecNumber evidence="1">2.1.2.1</ecNumber>
    </recommendedName>
</protein>
<organism>
    <name type="scientific">Actinobacillus pleuropneumoniae serotype 5b (strain L20)</name>
    <dbReference type="NCBI Taxonomy" id="416269"/>
    <lineage>
        <taxon>Bacteria</taxon>
        <taxon>Pseudomonadati</taxon>
        <taxon>Pseudomonadota</taxon>
        <taxon>Gammaproteobacteria</taxon>
        <taxon>Pasteurellales</taxon>
        <taxon>Pasteurellaceae</taxon>
        <taxon>Actinobacillus</taxon>
    </lineage>
</organism>
<reference key="1">
    <citation type="journal article" date="2008" name="J. Bacteriol.">
        <title>The complete genome sequence of Actinobacillus pleuropneumoniae L20 (serotype 5b).</title>
        <authorList>
            <person name="Foote S.J."/>
            <person name="Bosse J.T."/>
            <person name="Bouevitch A.B."/>
            <person name="Langford P.R."/>
            <person name="Young N.M."/>
            <person name="Nash J.H.E."/>
        </authorList>
    </citation>
    <scope>NUCLEOTIDE SEQUENCE [LARGE SCALE GENOMIC DNA]</scope>
    <source>
        <strain>L20</strain>
    </source>
</reference>
<keyword id="KW-0028">Amino-acid biosynthesis</keyword>
<keyword id="KW-0963">Cytoplasm</keyword>
<keyword id="KW-0554">One-carbon metabolism</keyword>
<keyword id="KW-0663">Pyridoxal phosphate</keyword>
<keyword id="KW-1185">Reference proteome</keyword>
<keyword id="KW-0808">Transferase</keyword>
<gene>
    <name evidence="1" type="primary">glyA</name>
    <name type="ordered locus">APL_0211</name>
</gene>
<name>GLYA_ACTP2</name>
<dbReference type="EC" id="2.1.2.1" evidence="1"/>
<dbReference type="EMBL" id="CP000569">
    <property type="protein sequence ID" value="ABN73319.1"/>
    <property type="molecule type" value="Genomic_DNA"/>
</dbReference>
<dbReference type="RefSeq" id="WP_011848335.1">
    <property type="nucleotide sequence ID" value="NC_009053.1"/>
</dbReference>
<dbReference type="SMR" id="A3MYT3"/>
<dbReference type="STRING" id="416269.APL_0211"/>
<dbReference type="EnsemblBacteria" id="ABN73319">
    <property type="protein sequence ID" value="ABN73319"/>
    <property type="gene ID" value="APL_0211"/>
</dbReference>
<dbReference type="KEGG" id="apl:APL_0211"/>
<dbReference type="PATRIC" id="fig|416269.6.peg.216"/>
<dbReference type="eggNOG" id="COG0112">
    <property type="taxonomic scope" value="Bacteria"/>
</dbReference>
<dbReference type="HOGENOM" id="CLU_022477_2_1_6"/>
<dbReference type="UniPathway" id="UPA00193"/>
<dbReference type="UniPathway" id="UPA00288">
    <property type="reaction ID" value="UER01023"/>
</dbReference>
<dbReference type="Proteomes" id="UP000001432">
    <property type="component" value="Chromosome"/>
</dbReference>
<dbReference type="GO" id="GO:0005829">
    <property type="term" value="C:cytosol"/>
    <property type="evidence" value="ECO:0007669"/>
    <property type="project" value="TreeGrafter"/>
</dbReference>
<dbReference type="GO" id="GO:0004372">
    <property type="term" value="F:glycine hydroxymethyltransferase activity"/>
    <property type="evidence" value="ECO:0007669"/>
    <property type="project" value="UniProtKB-UniRule"/>
</dbReference>
<dbReference type="GO" id="GO:0030170">
    <property type="term" value="F:pyridoxal phosphate binding"/>
    <property type="evidence" value="ECO:0007669"/>
    <property type="project" value="UniProtKB-UniRule"/>
</dbReference>
<dbReference type="GO" id="GO:0019264">
    <property type="term" value="P:glycine biosynthetic process from serine"/>
    <property type="evidence" value="ECO:0007669"/>
    <property type="project" value="UniProtKB-UniRule"/>
</dbReference>
<dbReference type="GO" id="GO:0035999">
    <property type="term" value="P:tetrahydrofolate interconversion"/>
    <property type="evidence" value="ECO:0007669"/>
    <property type="project" value="UniProtKB-UniRule"/>
</dbReference>
<dbReference type="CDD" id="cd00378">
    <property type="entry name" value="SHMT"/>
    <property type="match status" value="1"/>
</dbReference>
<dbReference type="FunFam" id="3.40.640.10:FF:000001">
    <property type="entry name" value="Serine hydroxymethyltransferase"/>
    <property type="match status" value="1"/>
</dbReference>
<dbReference type="FunFam" id="3.90.1150.10:FF:000003">
    <property type="entry name" value="Serine hydroxymethyltransferase"/>
    <property type="match status" value="1"/>
</dbReference>
<dbReference type="Gene3D" id="3.90.1150.10">
    <property type="entry name" value="Aspartate Aminotransferase, domain 1"/>
    <property type="match status" value="1"/>
</dbReference>
<dbReference type="Gene3D" id="3.40.640.10">
    <property type="entry name" value="Type I PLP-dependent aspartate aminotransferase-like (Major domain)"/>
    <property type="match status" value="1"/>
</dbReference>
<dbReference type="HAMAP" id="MF_00051">
    <property type="entry name" value="SHMT"/>
    <property type="match status" value="1"/>
</dbReference>
<dbReference type="InterPro" id="IPR015424">
    <property type="entry name" value="PyrdxlP-dep_Trfase"/>
</dbReference>
<dbReference type="InterPro" id="IPR015421">
    <property type="entry name" value="PyrdxlP-dep_Trfase_major"/>
</dbReference>
<dbReference type="InterPro" id="IPR015422">
    <property type="entry name" value="PyrdxlP-dep_Trfase_small"/>
</dbReference>
<dbReference type="InterPro" id="IPR001085">
    <property type="entry name" value="Ser_HO-MeTrfase"/>
</dbReference>
<dbReference type="InterPro" id="IPR049943">
    <property type="entry name" value="Ser_HO-MeTrfase-like"/>
</dbReference>
<dbReference type="InterPro" id="IPR019798">
    <property type="entry name" value="Ser_HO-MeTrfase_PLP_BS"/>
</dbReference>
<dbReference type="InterPro" id="IPR039429">
    <property type="entry name" value="SHMT-like_dom"/>
</dbReference>
<dbReference type="NCBIfam" id="NF000586">
    <property type="entry name" value="PRK00011.1"/>
    <property type="match status" value="1"/>
</dbReference>
<dbReference type="PANTHER" id="PTHR11680">
    <property type="entry name" value="SERINE HYDROXYMETHYLTRANSFERASE"/>
    <property type="match status" value="1"/>
</dbReference>
<dbReference type="PANTHER" id="PTHR11680:SF50">
    <property type="entry name" value="SERINE HYDROXYMETHYLTRANSFERASE"/>
    <property type="match status" value="1"/>
</dbReference>
<dbReference type="Pfam" id="PF00464">
    <property type="entry name" value="SHMT"/>
    <property type="match status" value="1"/>
</dbReference>
<dbReference type="PIRSF" id="PIRSF000412">
    <property type="entry name" value="SHMT"/>
    <property type="match status" value="1"/>
</dbReference>
<dbReference type="SUPFAM" id="SSF53383">
    <property type="entry name" value="PLP-dependent transferases"/>
    <property type="match status" value="1"/>
</dbReference>
<dbReference type="PROSITE" id="PS00096">
    <property type="entry name" value="SHMT"/>
    <property type="match status" value="1"/>
</dbReference>
<sequence length="421" mass="45983">MFTANMNIQDYDPILWQAIENENRRQEEHIELIASENYASPRVMQAQGSQFTNKYAEGYPGKRYYGGCEYADIVEQLAIDRAKQLFGADYVNVQPHSGSQANAAVYGALIQPNDTILGMDLAHGGHLTHGAKVSFSGKIYNSVLYGITAEGLIDYEDVRQKALECKPKMIVAGFSAYSQIVDWAKMREIADEVGAYLFVDMAHVAGLIAAGVYPSPLPYAHVVTTTTHKTLGGPRGGLILSACGDEEIYKKLQSSVFPANQGGPLVHIIAAKAVCFKEALEPEYKIYQQNVVKNAKAMVEVFKQRSYEVISNGTENHLFLVSFVKQGLTGKAADAALGQANITVNKNSVPNDPQKPFITSGIRIGTPAVTRRGFKEADVQALAGWMCDVLDSIGKDNHEQVIAETKAKVLDICARLPVYAK</sequence>
<feature type="chain" id="PRO_1000006212" description="Serine hydroxymethyltransferase">
    <location>
        <begin position="1"/>
        <end position="421"/>
    </location>
</feature>
<feature type="binding site" evidence="1">
    <location>
        <position position="121"/>
    </location>
    <ligand>
        <name>(6S)-5,6,7,8-tetrahydrofolate</name>
        <dbReference type="ChEBI" id="CHEBI:57453"/>
    </ligand>
</feature>
<feature type="binding site" evidence="1">
    <location>
        <begin position="125"/>
        <end position="127"/>
    </location>
    <ligand>
        <name>(6S)-5,6,7,8-tetrahydrofolate</name>
        <dbReference type="ChEBI" id="CHEBI:57453"/>
    </ligand>
</feature>
<feature type="site" description="Plays an important role in substrate specificity" evidence="1">
    <location>
        <position position="228"/>
    </location>
</feature>
<feature type="modified residue" description="N6-(pyridoxal phosphate)lysine" evidence="1">
    <location>
        <position position="229"/>
    </location>
</feature>
<proteinExistence type="inferred from homology"/>
<comment type="function">
    <text evidence="1">Catalyzes the reversible interconversion of serine and glycine with tetrahydrofolate (THF) serving as the one-carbon carrier. This reaction serves as the major source of one-carbon groups required for the biosynthesis of purines, thymidylate, methionine, and other important biomolecules. Also exhibits THF-independent aldolase activity toward beta-hydroxyamino acids, producing glycine and aldehydes, via a retro-aldol mechanism.</text>
</comment>
<comment type="catalytic activity">
    <reaction evidence="1">
        <text>(6R)-5,10-methylene-5,6,7,8-tetrahydrofolate + glycine + H2O = (6S)-5,6,7,8-tetrahydrofolate + L-serine</text>
        <dbReference type="Rhea" id="RHEA:15481"/>
        <dbReference type="ChEBI" id="CHEBI:15377"/>
        <dbReference type="ChEBI" id="CHEBI:15636"/>
        <dbReference type="ChEBI" id="CHEBI:33384"/>
        <dbReference type="ChEBI" id="CHEBI:57305"/>
        <dbReference type="ChEBI" id="CHEBI:57453"/>
        <dbReference type="EC" id="2.1.2.1"/>
    </reaction>
</comment>
<comment type="cofactor">
    <cofactor evidence="1">
        <name>pyridoxal 5'-phosphate</name>
        <dbReference type="ChEBI" id="CHEBI:597326"/>
    </cofactor>
</comment>
<comment type="pathway">
    <text evidence="1">One-carbon metabolism; tetrahydrofolate interconversion.</text>
</comment>
<comment type="pathway">
    <text evidence="1">Amino-acid biosynthesis; glycine biosynthesis; glycine from L-serine: step 1/1.</text>
</comment>
<comment type="subunit">
    <text evidence="1">Homodimer.</text>
</comment>
<comment type="subcellular location">
    <subcellularLocation>
        <location evidence="1">Cytoplasm</location>
    </subcellularLocation>
</comment>
<comment type="similarity">
    <text evidence="1">Belongs to the SHMT family.</text>
</comment>
<evidence type="ECO:0000255" key="1">
    <source>
        <dbReference type="HAMAP-Rule" id="MF_00051"/>
    </source>
</evidence>
<accession>A3MYT3</accession>